<comment type="function">
    <text evidence="1">Binds to the 23S rRNA.</text>
</comment>
<comment type="similarity">
    <text evidence="1">Belongs to the bacterial ribosomal protein bL9 family.</text>
</comment>
<feature type="chain" id="PRO_1000126869" description="Large ribosomal subunit protein bL9">
    <location>
        <begin position="1"/>
        <end position="189"/>
    </location>
</feature>
<gene>
    <name evidence="1" type="primary">rplI</name>
    <name type="ordered locus">Bind_2306</name>
</gene>
<evidence type="ECO:0000255" key="1">
    <source>
        <dbReference type="HAMAP-Rule" id="MF_00503"/>
    </source>
</evidence>
<evidence type="ECO:0000305" key="2"/>
<accession>B2IHD4</accession>
<dbReference type="EMBL" id="CP001016">
    <property type="protein sequence ID" value="ACB95919.1"/>
    <property type="molecule type" value="Genomic_DNA"/>
</dbReference>
<dbReference type="RefSeq" id="WP_012385272.1">
    <property type="nucleotide sequence ID" value="NC_010581.1"/>
</dbReference>
<dbReference type="SMR" id="B2IHD4"/>
<dbReference type="STRING" id="395963.Bind_2306"/>
<dbReference type="KEGG" id="bid:Bind_2306"/>
<dbReference type="eggNOG" id="COG0359">
    <property type="taxonomic scope" value="Bacteria"/>
</dbReference>
<dbReference type="HOGENOM" id="CLU_078938_1_0_5"/>
<dbReference type="OrthoDB" id="9788336at2"/>
<dbReference type="Proteomes" id="UP000001695">
    <property type="component" value="Chromosome"/>
</dbReference>
<dbReference type="GO" id="GO:1990904">
    <property type="term" value="C:ribonucleoprotein complex"/>
    <property type="evidence" value="ECO:0007669"/>
    <property type="project" value="UniProtKB-KW"/>
</dbReference>
<dbReference type="GO" id="GO:0005840">
    <property type="term" value="C:ribosome"/>
    <property type="evidence" value="ECO:0007669"/>
    <property type="project" value="UniProtKB-KW"/>
</dbReference>
<dbReference type="GO" id="GO:0019843">
    <property type="term" value="F:rRNA binding"/>
    <property type="evidence" value="ECO:0007669"/>
    <property type="project" value="UniProtKB-UniRule"/>
</dbReference>
<dbReference type="GO" id="GO:0003735">
    <property type="term" value="F:structural constituent of ribosome"/>
    <property type="evidence" value="ECO:0007669"/>
    <property type="project" value="InterPro"/>
</dbReference>
<dbReference type="GO" id="GO:0006412">
    <property type="term" value="P:translation"/>
    <property type="evidence" value="ECO:0007669"/>
    <property type="project" value="UniProtKB-UniRule"/>
</dbReference>
<dbReference type="Gene3D" id="3.10.430.100">
    <property type="entry name" value="Ribosomal protein L9, C-terminal domain"/>
    <property type="match status" value="1"/>
</dbReference>
<dbReference type="Gene3D" id="3.40.5.10">
    <property type="entry name" value="Ribosomal protein L9, N-terminal domain"/>
    <property type="match status" value="1"/>
</dbReference>
<dbReference type="HAMAP" id="MF_00503">
    <property type="entry name" value="Ribosomal_bL9"/>
    <property type="match status" value="1"/>
</dbReference>
<dbReference type="InterPro" id="IPR000244">
    <property type="entry name" value="Ribosomal_bL9"/>
</dbReference>
<dbReference type="InterPro" id="IPR009027">
    <property type="entry name" value="Ribosomal_bL9/RNase_H1_N"/>
</dbReference>
<dbReference type="InterPro" id="IPR020594">
    <property type="entry name" value="Ribosomal_bL9_bac/chp"/>
</dbReference>
<dbReference type="InterPro" id="IPR020069">
    <property type="entry name" value="Ribosomal_bL9_C"/>
</dbReference>
<dbReference type="InterPro" id="IPR036791">
    <property type="entry name" value="Ribosomal_bL9_C_sf"/>
</dbReference>
<dbReference type="InterPro" id="IPR020070">
    <property type="entry name" value="Ribosomal_bL9_N"/>
</dbReference>
<dbReference type="InterPro" id="IPR036935">
    <property type="entry name" value="Ribosomal_bL9_N_sf"/>
</dbReference>
<dbReference type="NCBIfam" id="TIGR00158">
    <property type="entry name" value="L9"/>
    <property type="match status" value="1"/>
</dbReference>
<dbReference type="PANTHER" id="PTHR21368">
    <property type="entry name" value="50S RIBOSOMAL PROTEIN L9"/>
    <property type="match status" value="1"/>
</dbReference>
<dbReference type="Pfam" id="PF03948">
    <property type="entry name" value="Ribosomal_L9_C"/>
    <property type="match status" value="1"/>
</dbReference>
<dbReference type="Pfam" id="PF01281">
    <property type="entry name" value="Ribosomal_L9_N"/>
    <property type="match status" value="1"/>
</dbReference>
<dbReference type="SUPFAM" id="SSF55658">
    <property type="entry name" value="L9 N-domain-like"/>
    <property type="match status" value="1"/>
</dbReference>
<dbReference type="SUPFAM" id="SSF55653">
    <property type="entry name" value="Ribosomal protein L9 C-domain"/>
    <property type="match status" value="1"/>
</dbReference>
<dbReference type="PROSITE" id="PS00651">
    <property type="entry name" value="RIBOSOMAL_L9"/>
    <property type="match status" value="1"/>
</dbReference>
<protein>
    <recommendedName>
        <fullName evidence="1">Large ribosomal subunit protein bL9</fullName>
    </recommendedName>
    <alternativeName>
        <fullName evidence="2">50S ribosomal protein L9</fullName>
    </alternativeName>
</protein>
<proteinExistence type="inferred from homology"/>
<organism>
    <name type="scientific">Beijerinckia indica subsp. indica (strain ATCC 9039 / DSM 1715 / NCIMB 8712)</name>
    <dbReference type="NCBI Taxonomy" id="395963"/>
    <lineage>
        <taxon>Bacteria</taxon>
        <taxon>Pseudomonadati</taxon>
        <taxon>Pseudomonadota</taxon>
        <taxon>Alphaproteobacteria</taxon>
        <taxon>Hyphomicrobiales</taxon>
        <taxon>Beijerinckiaceae</taxon>
        <taxon>Beijerinckia</taxon>
    </lineage>
</organism>
<reference key="1">
    <citation type="journal article" date="2010" name="J. Bacteriol.">
        <title>Complete genome sequence of Beijerinckia indica subsp. indica.</title>
        <authorList>
            <person name="Tamas I."/>
            <person name="Dedysh S.N."/>
            <person name="Liesack W."/>
            <person name="Stott M.B."/>
            <person name="Alam M."/>
            <person name="Murrell J.C."/>
            <person name="Dunfield P.F."/>
        </authorList>
    </citation>
    <scope>NUCLEOTIDE SEQUENCE [LARGE SCALE GENOMIC DNA]</scope>
    <source>
        <strain>ATCC 9039 / DSM 1715 / NCIMB 8712</strain>
    </source>
</reference>
<keyword id="KW-1185">Reference proteome</keyword>
<keyword id="KW-0687">Ribonucleoprotein</keyword>
<keyword id="KW-0689">Ribosomal protein</keyword>
<keyword id="KW-0694">RNA-binding</keyword>
<keyword id="KW-0699">rRNA-binding</keyword>
<name>RL9_BEII9</name>
<sequence>MDVILLERVAKLGHMGDIVRVKNGYARNFLLPGGKALRATEANKKHFESQRAHLETRNQELRDQAAAIGEKLDGQTFVIIRQAGETGQLYGSVSPRDIAEAAIAAGFDVHRNQIALTTPIKTIGLHEVPVVLHPEVSVNVTVNIARSPVEAERQAKGEEINVVEETNLDELGLEIGAALADAGGSLGDR</sequence>